<feature type="chain" id="PRO_1000146999" description="Protein Smg homolog">
    <location>
        <begin position="1"/>
        <end position="148"/>
    </location>
</feature>
<evidence type="ECO:0000255" key="1">
    <source>
        <dbReference type="HAMAP-Rule" id="MF_00598"/>
    </source>
</evidence>
<organism>
    <name type="scientific">Thiobacillus denitrificans (strain ATCC 25259 / T1)</name>
    <dbReference type="NCBI Taxonomy" id="292415"/>
    <lineage>
        <taxon>Bacteria</taxon>
        <taxon>Pseudomonadati</taxon>
        <taxon>Pseudomonadota</taxon>
        <taxon>Betaproteobacteria</taxon>
        <taxon>Nitrosomonadales</taxon>
        <taxon>Thiobacillaceae</taxon>
        <taxon>Thiobacillus</taxon>
    </lineage>
</organism>
<reference key="1">
    <citation type="journal article" date="2006" name="J. Bacteriol.">
        <title>The genome sequence of the obligately chemolithoautotrophic, facultatively anaerobic bacterium Thiobacillus denitrificans.</title>
        <authorList>
            <person name="Beller H.R."/>
            <person name="Chain P.S."/>
            <person name="Letain T.E."/>
            <person name="Chakicherla A."/>
            <person name="Larimer F.W."/>
            <person name="Richardson P.M."/>
            <person name="Coleman M.A."/>
            <person name="Wood A.P."/>
            <person name="Kelly D.P."/>
        </authorList>
    </citation>
    <scope>NUCLEOTIDE SEQUENCE [LARGE SCALE GENOMIC DNA]</scope>
    <source>
        <strain>ATCC 25259 / T1</strain>
    </source>
</reference>
<sequence>MLDILVYLYESFRMAELAPDRDALEKRLFAAGFEEAHINATLDWFANLTSSAAHDRLAYAQYRHYAPEELESLNDACREEISYLVGAEILDPESREWVISGLMALAGEDIEPDHVRWMTLIVLWSRGLIEHFTHLEEMLLNHEPGRLH</sequence>
<comment type="similarity">
    <text evidence="1">Belongs to the Smg family.</text>
</comment>
<keyword id="KW-1185">Reference proteome</keyword>
<proteinExistence type="inferred from homology"/>
<protein>
    <recommendedName>
        <fullName evidence="1">Protein Smg homolog</fullName>
    </recommendedName>
</protein>
<accession>Q3SMS6</accession>
<dbReference type="EMBL" id="CP000116">
    <property type="protein sequence ID" value="AAZ95964.1"/>
    <property type="molecule type" value="Genomic_DNA"/>
</dbReference>
<dbReference type="RefSeq" id="WP_011310524.1">
    <property type="nucleotide sequence ID" value="NC_007404.1"/>
</dbReference>
<dbReference type="SMR" id="Q3SMS6"/>
<dbReference type="STRING" id="292415.Tbd_0011"/>
<dbReference type="DNASU" id="3673846"/>
<dbReference type="KEGG" id="tbd:Tbd_0011"/>
<dbReference type="eggNOG" id="COG2922">
    <property type="taxonomic scope" value="Bacteria"/>
</dbReference>
<dbReference type="HOGENOM" id="CLU_133242_0_0_4"/>
<dbReference type="OrthoDB" id="5297467at2"/>
<dbReference type="Proteomes" id="UP000008291">
    <property type="component" value="Chromosome"/>
</dbReference>
<dbReference type="HAMAP" id="MF_00598">
    <property type="entry name" value="Smg"/>
    <property type="match status" value="1"/>
</dbReference>
<dbReference type="InterPro" id="IPR007456">
    <property type="entry name" value="Smg"/>
</dbReference>
<dbReference type="PANTHER" id="PTHR38692">
    <property type="entry name" value="PROTEIN SMG"/>
    <property type="match status" value="1"/>
</dbReference>
<dbReference type="PANTHER" id="PTHR38692:SF1">
    <property type="entry name" value="PROTEIN SMG"/>
    <property type="match status" value="1"/>
</dbReference>
<dbReference type="Pfam" id="PF04361">
    <property type="entry name" value="DUF494"/>
    <property type="match status" value="1"/>
</dbReference>
<gene>
    <name evidence="1" type="primary">smg</name>
    <name type="ordered locus">Tbd_0011</name>
</gene>
<name>SMG_THIDA</name>